<dbReference type="EMBL" id="AF022186">
    <property type="protein sequence ID" value="AAF26453.1"/>
    <property type="molecule type" value="Genomic_DNA"/>
</dbReference>
<dbReference type="PIR" id="T11965">
    <property type="entry name" value="T11965"/>
</dbReference>
<dbReference type="RefSeq" id="NP_045069.1">
    <property type="nucleotide sequence ID" value="NC_001840.1"/>
</dbReference>
<dbReference type="GeneID" id="800218"/>
<dbReference type="GO" id="GO:0009507">
    <property type="term" value="C:chloroplast"/>
    <property type="evidence" value="ECO:0007669"/>
    <property type="project" value="UniProtKB-SubCell"/>
</dbReference>
<dbReference type="InterPro" id="IPR007572">
    <property type="entry name" value="Uncharacterised_Ycf20"/>
</dbReference>
<dbReference type="PANTHER" id="PTHR33787">
    <property type="match status" value="1"/>
</dbReference>
<dbReference type="PANTHER" id="PTHR33787:SF4">
    <property type="entry name" value="YCF20-LIKE PROTEIN"/>
    <property type="match status" value="1"/>
</dbReference>
<dbReference type="Pfam" id="PF04483">
    <property type="entry name" value="DUF565"/>
    <property type="match status" value="1"/>
</dbReference>
<reference key="1">
    <citation type="journal article" date="2000" name="J. Mol. Evol.">
        <title>The structure and gene repertoire of an ancient red algal plastid genome.</title>
        <authorList>
            <person name="Gloeckner G."/>
            <person name="Rosenthal A."/>
            <person name="Valentin K.-U."/>
        </authorList>
    </citation>
    <scope>NUCLEOTIDE SEQUENCE [LARGE SCALE GENOMIC DNA]</scope>
    <source>
        <strain>RK-1</strain>
    </source>
</reference>
<comment type="subcellular location">
    <subcellularLocation>
        <location>Plastid</location>
        <location>Chloroplast</location>
    </subcellularLocation>
</comment>
<comment type="similarity">
    <text evidence="1">Belongs to the ycf20 family.</text>
</comment>
<accession>Q9MVP1</accession>
<sequence length="101" mass="11550">MTNTQTRVIKQINKTILATCSFIFLFGFFLSSATSTILIQTNEWSILTAAILISIVELFNYLKHKFQFNDRKSGYNCFFFINLAKLGLLYGLFIDAFKLGS</sequence>
<feature type="chain" id="PRO_0000217324" description="Uncharacterized protein ycf20">
    <location>
        <begin position="1"/>
        <end position="101"/>
    </location>
</feature>
<gene>
    <name type="primary">ycf20</name>
</gene>
<name>YCF20_CYACA</name>
<keyword id="KW-0150">Chloroplast</keyword>
<keyword id="KW-0934">Plastid</keyword>
<proteinExistence type="inferred from homology"/>
<organism>
    <name type="scientific">Cyanidium caldarium</name>
    <name type="common">Red alga</name>
    <dbReference type="NCBI Taxonomy" id="2771"/>
    <lineage>
        <taxon>Eukaryota</taxon>
        <taxon>Rhodophyta</taxon>
        <taxon>Bangiophyceae</taxon>
        <taxon>Cyanidiales</taxon>
        <taxon>Cyanidiaceae</taxon>
        <taxon>Cyanidium</taxon>
    </lineage>
</organism>
<protein>
    <recommendedName>
        <fullName>Uncharacterized protein ycf20</fullName>
    </recommendedName>
</protein>
<geneLocation type="chloroplast"/>
<evidence type="ECO:0000305" key="1"/>